<organism>
    <name type="scientific">Brucella anthropi (strain ATCC 49188 / DSM 6882 / CCUG 24695 / JCM 21032 / LMG 3331 / NBRC 15819 / NCTC 12168 / Alc 37)</name>
    <name type="common">Ochrobactrum anthropi</name>
    <dbReference type="NCBI Taxonomy" id="439375"/>
    <lineage>
        <taxon>Bacteria</taxon>
        <taxon>Pseudomonadati</taxon>
        <taxon>Pseudomonadota</taxon>
        <taxon>Alphaproteobacteria</taxon>
        <taxon>Hyphomicrobiales</taxon>
        <taxon>Brucellaceae</taxon>
        <taxon>Brucella/Ochrobactrum group</taxon>
        <taxon>Brucella</taxon>
    </lineage>
</organism>
<keyword id="KW-0001">2Fe-2S</keyword>
<keyword id="KW-0028">Amino-acid biosynthesis</keyword>
<keyword id="KW-0100">Branched-chain amino acid biosynthesis</keyword>
<keyword id="KW-0408">Iron</keyword>
<keyword id="KW-0411">Iron-sulfur</keyword>
<keyword id="KW-0456">Lyase</keyword>
<keyword id="KW-0460">Magnesium</keyword>
<keyword id="KW-0479">Metal-binding</keyword>
<keyword id="KW-1185">Reference proteome</keyword>
<name>ILVD_BRUA4</name>
<protein>
    <recommendedName>
        <fullName evidence="1">Dihydroxy-acid dehydratase</fullName>
        <shortName evidence="1">DAD</shortName>
        <ecNumber evidence="1">4.2.1.9</ecNumber>
    </recommendedName>
</protein>
<reference key="1">
    <citation type="journal article" date="2011" name="J. Bacteriol.">
        <title>Genome of Ochrobactrum anthropi ATCC 49188 T, a versatile opportunistic pathogen and symbiont of several eukaryotic hosts.</title>
        <authorList>
            <person name="Chain P.S."/>
            <person name="Lang D.M."/>
            <person name="Comerci D.J."/>
            <person name="Malfatti S.A."/>
            <person name="Vergez L.M."/>
            <person name="Shin M."/>
            <person name="Ugalde R.A."/>
            <person name="Garcia E."/>
            <person name="Tolmasky M.E."/>
        </authorList>
    </citation>
    <scope>NUCLEOTIDE SEQUENCE [LARGE SCALE GENOMIC DNA]</scope>
    <source>
        <strain>ATCC 49188 / DSM 6882 / CCUG 24695 / JCM 21032 / LMG 3331 / NBRC 15819 / NCTC 12168 / Alc 37</strain>
    </source>
</reference>
<accession>A6WV39</accession>
<sequence length="611" mass="65366">MPPYRSRTTTHGRNMAGARGLWRATGMKDEDFGKPIIAVVNSFTQFVPGHVHLKDLGQLVAREIESAGGVAKEFNTIAVDDGIAMGHDGMLYSLPSRELIADSVEYMVNAHCADAMVCISNCDKITPGMLMAALRLNIPVVFVSGGPMEAGKVVWDDQVKKLDLVDAMVAAADDSYTDDQVKAIERSACPTCGSCSGMFTANSMNCLTEALGLSLPGNGSTLATHADRKRLFVEAGHLVVDLARRYYEQDDESVLPRSIASFPAFENAMTLDIAMGGSTNTVLHLLAAAQEAEIDFTMADIDRLSRRVPVLCKVAPANNTVHMEDVHRAGGIMGILGQLDKAGLINTDLPTVHSETVAKALDHWDVTRTNSDMVHKFYSAAPGGVPTQVAFSQERRFDSVDTDREKGVIRSKEHAFSQDGGLAVLYGNLAEDGCIVKTAGVDDSILKFSGPARIFESQDTAVLGILNGKIKAGDIVLIRYEGPRGGPGMQEMLYPTSYLKSKGLGKACALITDGRFSGGSSGLSIGHVSPEAAEGGTIGLVREGDIIDIDIPNRKIHLAVDDATLAERRAEQEETGWKPAETRKRKISTALKAYASMATSAAKGAVRKLPD</sequence>
<feature type="chain" id="PRO_1000001022" description="Dihydroxy-acid dehydratase">
    <location>
        <begin position="1"/>
        <end position="611"/>
    </location>
</feature>
<feature type="active site" description="Proton acceptor" evidence="1">
    <location>
        <position position="517"/>
    </location>
</feature>
<feature type="binding site" evidence="1">
    <location>
        <position position="81"/>
    </location>
    <ligand>
        <name>Mg(2+)</name>
        <dbReference type="ChEBI" id="CHEBI:18420"/>
    </ligand>
</feature>
<feature type="binding site" evidence="1">
    <location>
        <position position="122"/>
    </location>
    <ligand>
        <name>[2Fe-2S] cluster</name>
        <dbReference type="ChEBI" id="CHEBI:190135"/>
    </ligand>
</feature>
<feature type="binding site" evidence="1">
    <location>
        <position position="123"/>
    </location>
    <ligand>
        <name>Mg(2+)</name>
        <dbReference type="ChEBI" id="CHEBI:18420"/>
    </ligand>
</feature>
<feature type="binding site" description="via carbamate group" evidence="1">
    <location>
        <position position="124"/>
    </location>
    <ligand>
        <name>Mg(2+)</name>
        <dbReference type="ChEBI" id="CHEBI:18420"/>
    </ligand>
</feature>
<feature type="binding site" evidence="1">
    <location>
        <position position="195"/>
    </location>
    <ligand>
        <name>[2Fe-2S] cluster</name>
        <dbReference type="ChEBI" id="CHEBI:190135"/>
    </ligand>
</feature>
<feature type="binding site" evidence="1">
    <location>
        <position position="491"/>
    </location>
    <ligand>
        <name>Mg(2+)</name>
        <dbReference type="ChEBI" id="CHEBI:18420"/>
    </ligand>
</feature>
<feature type="modified residue" description="N6-carboxylysine" evidence="1">
    <location>
        <position position="124"/>
    </location>
</feature>
<evidence type="ECO:0000255" key="1">
    <source>
        <dbReference type="HAMAP-Rule" id="MF_00012"/>
    </source>
</evidence>
<proteinExistence type="inferred from homology"/>
<comment type="function">
    <text evidence="1">Functions in the biosynthesis of branched-chain amino acids. Catalyzes the dehydration of (2R,3R)-2,3-dihydroxy-3-methylpentanoate (2,3-dihydroxy-3-methylvalerate) into 2-oxo-3-methylpentanoate (2-oxo-3-methylvalerate) and of (2R)-2,3-dihydroxy-3-methylbutanoate (2,3-dihydroxyisovalerate) into 2-oxo-3-methylbutanoate (2-oxoisovalerate), the penultimate precursor to L-isoleucine and L-valine, respectively.</text>
</comment>
<comment type="catalytic activity">
    <reaction evidence="1">
        <text>(2R)-2,3-dihydroxy-3-methylbutanoate = 3-methyl-2-oxobutanoate + H2O</text>
        <dbReference type="Rhea" id="RHEA:24809"/>
        <dbReference type="ChEBI" id="CHEBI:11851"/>
        <dbReference type="ChEBI" id="CHEBI:15377"/>
        <dbReference type="ChEBI" id="CHEBI:49072"/>
        <dbReference type="EC" id="4.2.1.9"/>
    </reaction>
    <physiologicalReaction direction="left-to-right" evidence="1">
        <dbReference type="Rhea" id="RHEA:24810"/>
    </physiologicalReaction>
</comment>
<comment type="catalytic activity">
    <reaction evidence="1">
        <text>(2R,3R)-2,3-dihydroxy-3-methylpentanoate = (S)-3-methyl-2-oxopentanoate + H2O</text>
        <dbReference type="Rhea" id="RHEA:27694"/>
        <dbReference type="ChEBI" id="CHEBI:15377"/>
        <dbReference type="ChEBI" id="CHEBI:35146"/>
        <dbReference type="ChEBI" id="CHEBI:49258"/>
        <dbReference type="EC" id="4.2.1.9"/>
    </reaction>
    <physiologicalReaction direction="left-to-right" evidence="1">
        <dbReference type="Rhea" id="RHEA:27695"/>
    </physiologicalReaction>
</comment>
<comment type="cofactor">
    <cofactor evidence="1">
        <name>[2Fe-2S] cluster</name>
        <dbReference type="ChEBI" id="CHEBI:190135"/>
    </cofactor>
    <text evidence="1">Binds 1 [2Fe-2S] cluster per subunit. This cluster acts as a Lewis acid cofactor.</text>
</comment>
<comment type="cofactor">
    <cofactor evidence="1">
        <name>Mg(2+)</name>
        <dbReference type="ChEBI" id="CHEBI:18420"/>
    </cofactor>
</comment>
<comment type="pathway">
    <text evidence="1">Amino-acid biosynthesis; L-isoleucine biosynthesis; L-isoleucine from 2-oxobutanoate: step 3/4.</text>
</comment>
<comment type="pathway">
    <text evidence="1">Amino-acid biosynthesis; L-valine biosynthesis; L-valine from pyruvate: step 3/4.</text>
</comment>
<comment type="subunit">
    <text evidence="1">Homodimer.</text>
</comment>
<comment type="similarity">
    <text evidence="1">Belongs to the IlvD/Edd family.</text>
</comment>
<dbReference type="EC" id="4.2.1.9" evidence="1"/>
<dbReference type="EMBL" id="CP000758">
    <property type="protein sequence ID" value="ABS12843.1"/>
    <property type="molecule type" value="Genomic_DNA"/>
</dbReference>
<dbReference type="RefSeq" id="WP_011982333.1">
    <property type="nucleotide sequence ID" value="NC_009667.1"/>
</dbReference>
<dbReference type="SMR" id="A6WV39"/>
<dbReference type="STRING" id="439375.Oant_0112"/>
<dbReference type="KEGG" id="oan:Oant_0112"/>
<dbReference type="PATRIC" id="fig|439375.7.peg.119"/>
<dbReference type="eggNOG" id="COG0129">
    <property type="taxonomic scope" value="Bacteria"/>
</dbReference>
<dbReference type="HOGENOM" id="CLU_014271_4_3_5"/>
<dbReference type="PhylomeDB" id="A6WV39"/>
<dbReference type="UniPathway" id="UPA00047">
    <property type="reaction ID" value="UER00057"/>
</dbReference>
<dbReference type="UniPathway" id="UPA00049">
    <property type="reaction ID" value="UER00061"/>
</dbReference>
<dbReference type="Proteomes" id="UP000002301">
    <property type="component" value="Chromosome 1"/>
</dbReference>
<dbReference type="GO" id="GO:0005829">
    <property type="term" value="C:cytosol"/>
    <property type="evidence" value="ECO:0007669"/>
    <property type="project" value="TreeGrafter"/>
</dbReference>
<dbReference type="GO" id="GO:0051537">
    <property type="term" value="F:2 iron, 2 sulfur cluster binding"/>
    <property type="evidence" value="ECO:0007669"/>
    <property type="project" value="UniProtKB-UniRule"/>
</dbReference>
<dbReference type="GO" id="GO:0004160">
    <property type="term" value="F:dihydroxy-acid dehydratase activity"/>
    <property type="evidence" value="ECO:0007669"/>
    <property type="project" value="UniProtKB-UniRule"/>
</dbReference>
<dbReference type="GO" id="GO:0000287">
    <property type="term" value="F:magnesium ion binding"/>
    <property type="evidence" value="ECO:0007669"/>
    <property type="project" value="UniProtKB-UniRule"/>
</dbReference>
<dbReference type="GO" id="GO:0009097">
    <property type="term" value="P:isoleucine biosynthetic process"/>
    <property type="evidence" value="ECO:0007669"/>
    <property type="project" value="UniProtKB-UniRule"/>
</dbReference>
<dbReference type="GO" id="GO:0009099">
    <property type="term" value="P:L-valine biosynthetic process"/>
    <property type="evidence" value="ECO:0007669"/>
    <property type="project" value="UniProtKB-UniRule"/>
</dbReference>
<dbReference type="FunFam" id="3.50.30.80:FF:000001">
    <property type="entry name" value="Dihydroxy-acid dehydratase"/>
    <property type="match status" value="1"/>
</dbReference>
<dbReference type="Gene3D" id="3.50.30.80">
    <property type="entry name" value="IlvD/EDD C-terminal domain-like"/>
    <property type="match status" value="1"/>
</dbReference>
<dbReference type="HAMAP" id="MF_00012">
    <property type="entry name" value="IlvD"/>
    <property type="match status" value="1"/>
</dbReference>
<dbReference type="InterPro" id="IPR042096">
    <property type="entry name" value="Dihydro-acid_dehy_C"/>
</dbReference>
<dbReference type="InterPro" id="IPR004404">
    <property type="entry name" value="DihydroxyA_deHydtase"/>
</dbReference>
<dbReference type="InterPro" id="IPR020558">
    <property type="entry name" value="DiOHA_6PGluconate_deHydtase_CS"/>
</dbReference>
<dbReference type="InterPro" id="IPR056740">
    <property type="entry name" value="ILV_EDD_C"/>
</dbReference>
<dbReference type="InterPro" id="IPR000581">
    <property type="entry name" value="ILV_EDD_N"/>
</dbReference>
<dbReference type="InterPro" id="IPR037237">
    <property type="entry name" value="IlvD/EDD_N"/>
</dbReference>
<dbReference type="NCBIfam" id="TIGR00110">
    <property type="entry name" value="ilvD"/>
    <property type="match status" value="1"/>
</dbReference>
<dbReference type="NCBIfam" id="NF009103">
    <property type="entry name" value="PRK12448.1"/>
    <property type="match status" value="1"/>
</dbReference>
<dbReference type="PANTHER" id="PTHR43661">
    <property type="entry name" value="D-XYLONATE DEHYDRATASE"/>
    <property type="match status" value="1"/>
</dbReference>
<dbReference type="PANTHER" id="PTHR43661:SF3">
    <property type="entry name" value="D-XYLONATE DEHYDRATASE YAGF-RELATED"/>
    <property type="match status" value="1"/>
</dbReference>
<dbReference type="Pfam" id="PF24877">
    <property type="entry name" value="ILV_EDD_C"/>
    <property type="match status" value="1"/>
</dbReference>
<dbReference type="Pfam" id="PF00920">
    <property type="entry name" value="ILVD_EDD_N"/>
    <property type="match status" value="1"/>
</dbReference>
<dbReference type="SUPFAM" id="SSF143975">
    <property type="entry name" value="IlvD/EDD N-terminal domain-like"/>
    <property type="match status" value="1"/>
</dbReference>
<dbReference type="SUPFAM" id="SSF52016">
    <property type="entry name" value="LeuD/IlvD-like"/>
    <property type="match status" value="1"/>
</dbReference>
<dbReference type="PROSITE" id="PS00886">
    <property type="entry name" value="ILVD_EDD_1"/>
    <property type="match status" value="1"/>
</dbReference>
<dbReference type="PROSITE" id="PS00887">
    <property type="entry name" value="ILVD_EDD_2"/>
    <property type="match status" value="1"/>
</dbReference>
<gene>
    <name evidence="1" type="primary">ilvD</name>
    <name type="ordered locus">Oant_0112</name>
</gene>